<protein>
    <recommendedName>
        <fullName>Transcription factor HEC3</fullName>
    </recommendedName>
    <alternativeName>
        <fullName>Basic helix-loop-helix protein 43</fullName>
        <shortName>AtbHLH43</shortName>
        <shortName>bHLH 43</shortName>
    </alternativeName>
    <alternativeName>
        <fullName>Protein HECATE 3</fullName>
    </alternativeName>
    <alternativeName>
        <fullName>Transcription factor EN 119</fullName>
    </alternativeName>
    <alternativeName>
        <fullName>bHLH transcription factor bHLH043</fullName>
    </alternativeName>
</protein>
<accession>Q9LXD8</accession>
<reference key="1">
    <citation type="journal article" date="1999" name="DNA Res.">
        <title>Structural analysis of Arabidopsis thaliana chromosome 5. IX. Sequence features of the regions of 1,011,550 bp covered by seventeen P1 and TAC clones.</title>
        <authorList>
            <person name="Kaneko T."/>
            <person name="Katoh T."/>
            <person name="Sato S."/>
            <person name="Nakamura Y."/>
            <person name="Asamizu E."/>
            <person name="Kotani H."/>
            <person name="Miyajima N."/>
            <person name="Tabata S."/>
        </authorList>
    </citation>
    <scope>NUCLEOTIDE SEQUENCE [LARGE SCALE GENOMIC DNA]</scope>
    <source>
        <strain>cv. Columbia</strain>
    </source>
</reference>
<reference key="2">
    <citation type="journal article" date="2000" name="Nature">
        <title>Sequence and analysis of chromosome 5 of the plant Arabidopsis thaliana.</title>
        <authorList>
            <person name="Tabata S."/>
            <person name="Kaneko T."/>
            <person name="Nakamura Y."/>
            <person name="Kotani H."/>
            <person name="Kato T."/>
            <person name="Asamizu E."/>
            <person name="Miyajima N."/>
            <person name="Sasamoto S."/>
            <person name="Kimura T."/>
            <person name="Hosouchi T."/>
            <person name="Kawashima K."/>
            <person name="Kohara M."/>
            <person name="Matsumoto M."/>
            <person name="Matsuno A."/>
            <person name="Muraki A."/>
            <person name="Nakayama S."/>
            <person name="Nakazaki N."/>
            <person name="Naruo K."/>
            <person name="Okumura S."/>
            <person name="Shinpo S."/>
            <person name="Takeuchi C."/>
            <person name="Wada T."/>
            <person name="Watanabe A."/>
            <person name="Yamada M."/>
            <person name="Yasuda M."/>
            <person name="Sato S."/>
            <person name="de la Bastide M."/>
            <person name="Huang E."/>
            <person name="Spiegel L."/>
            <person name="Gnoj L."/>
            <person name="O'Shaughnessy A."/>
            <person name="Preston R."/>
            <person name="Habermann K."/>
            <person name="Murray J."/>
            <person name="Johnson D."/>
            <person name="Rohlfing T."/>
            <person name="Nelson J."/>
            <person name="Stoneking T."/>
            <person name="Pepin K."/>
            <person name="Spieth J."/>
            <person name="Sekhon M."/>
            <person name="Armstrong J."/>
            <person name="Becker M."/>
            <person name="Belter E."/>
            <person name="Cordum H."/>
            <person name="Cordes M."/>
            <person name="Courtney L."/>
            <person name="Courtney W."/>
            <person name="Dante M."/>
            <person name="Du H."/>
            <person name="Edwards J."/>
            <person name="Fryman J."/>
            <person name="Haakensen B."/>
            <person name="Lamar E."/>
            <person name="Latreille P."/>
            <person name="Leonard S."/>
            <person name="Meyer R."/>
            <person name="Mulvaney E."/>
            <person name="Ozersky P."/>
            <person name="Riley A."/>
            <person name="Strowmatt C."/>
            <person name="Wagner-McPherson C."/>
            <person name="Wollam A."/>
            <person name="Yoakum M."/>
            <person name="Bell M."/>
            <person name="Dedhia N."/>
            <person name="Parnell L."/>
            <person name="Shah R."/>
            <person name="Rodriguez M."/>
            <person name="Hoon See L."/>
            <person name="Vil D."/>
            <person name="Baker J."/>
            <person name="Kirchoff K."/>
            <person name="Toth K."/>
            <person name="King L."/>
            <person name="Bahret A."/>
            <person name="Miller B."/>
            <person name="Marra M.A."/>
            <person name="Martienssen R."/>
            <person name="McCombie W.R."/>
            <person name="Wilson R.K."/>
            <person name="Murphy G."/>
            <person name="Bancroft I."/>
            <person name="Volckaert G."/>
            <person name="Wambutt R."/>
            <person name="Duesterhoeft A."/>
            <person name="Stiekema W."/>
            <person name="Pohl T."/>
            <person name="Entian K.-D."/>
            <person name="Terryn N."/>
            <person name="Hartley N."/>
            <person name="Bent E."/>
            <person name="Johnson S."/>
            <person name="Langham S.-A."/>
            <person name="McCullagh B."/>
            <person name="Robben J."/>
            <person name="Grymonprez B."/>
            <person name="Zimmermann W."/>
            <person name="Ramsperger U."/>
            <person name="Wedler H."/>
            <person name="Balke K."/>
            <person name="Wedler E."/>
            <person name="Peters S."/>
            <person name="van Staveren M."/>
            <person name="Dirkse W."/>
            <person name="Mooijman P."/>
            <person name="Klein Lankhorst R."/>
            <person name="Weitzenegger T."/>
            <person name="Bothe G."/>
            <person name="Rose M."/>
            <person name="Hauf J."/>
            <person name="Berneiser S."/>
            <person name="Hempel S."/>
            <person name="Feldpausch M."/>
            <person name="Lamberth S."/>
            <person name="Villarroel R."/>
            <person name="Gielen J."/>
            <person name="Ardiles W."/>
            <person name="Bents O."/>
            <person name="Lemcke K."/>
            <person name="Kolesov G."/>
            <person name="Mayer K.F.X."/>
            <person name="Rudd S."/>
            <person name="Schoof H."/>
            <person name="Schueller C."/>
            <person name="Zaccaria P."/>
            <person name="Mewes H.-W."/>
            <person name="Bevan M."/>
            <person name="Fransz P.F."/>
        </authorList>
    </citation>
    <scope>NUCLEOTIDE SEQUENCE [LARGE SCALE GENOMIC DNA]</scope>
    <source>
        <strain>cv. Columbia</strain>
    </source>
</reference>
<reference key="3">
    <citation type="journal article" date="2017" name="Plant J.">
        <title>Araport11: a complete reannotation of the Arabidopsis thaliana reference genome.</title>
        <authorList>
            <person name="Cheng C.Y."/>
            <person name="Krishnakumar V."/>
            <person name="Chan A.P."/>
            <person name="Thibaud-Nissen F."/>
            <person name="Schobel S."/>
            <person name="Town C.D."/>
        </authorList>
    </citation>
    <scope>GENOME REANNOTATION</scope>
    <source>
        <strain>cv. Columbia</strain>
    </source>
</reference>
<reference key="4">
    <citation type="journal article" date="2003" name="Mol. Biol. Evol.">
        <title>The basic helix-loop-helix transcription factor family in plants: a genome-wide study of protein structure and functional diversity.</title>
        <authorList>
            <person name="Heim M.A."/>
            <person name="Jakoby M."/>
            <person name="Werber M."/>
            <person name="Martin C."/>
            <person name="Weisshaar B."/>
            <person name="Bailey P.C."/>
        </authorList>
    </citation>
    <scope>GENE FAMILY</scope>
    <scope>NOMENCLATURE</scope>
</reference>
<reference key="5">
    <citation type="journal article" date="2003" name="Plant Cell">
        <title>The Arabidopsis basic/helix-loop-helix transcription factor family.</title>
        <authorList>
            <person name="Toledo-Ortiz G."/>
            <person name="Huq E."/>
            <person name="Quail P.H."/>
        </authorList>
    </citation>
    <scope>GENE FAMILY</scope>
</reference>
<reference key="6">
    <citation type="journal article" date="2003" name="Plant Cell">
        <title>Update on the basic helix-loop-helix transcription factor gene family in Arabidopsis thaliana.</title>
        <authorList>
            <person name="Bailey P.C."/>
            <person name="Martin C."/>
            <person name="Toledo-Ortiz G."/>
            <person name="Quail P.H."/>
            <person name="Huq E."/>
            <person name="Heim M.A."/>
            <person name="Jakoby M."/>
            <person name="Werber M."/>
            <person name="Weisshaar B."/>
        </authorList>
    </citation>
    <scope>GENE FAMILY</scope>
    <scope>NOMENCLATURE</scope>
</reference>
<reference key="7">
    <citation type="journal article" date="2007" name="Development">
        <title>The HECATE genes regulate female reproductive tract development in Arabidopsis thaliana.</title>
        <authorList>
            <person name="Gremski K."/>
            <person name="Ditta G."/>
            <person name="Yanofsky M.F."/>
        </authorList>
    </citation>
    <scope>FUNCTION</scope>
    <scope>INTERACTION WITH SPT</scope>
    <scope>INDUCTION BY ETT</scope>
    <scope>DEVELOPMENTAL STAGE</scope>
    <scope>TISSUE SPECIFICITY</scope>
    <scope>DISRUPTION PHENOTYPE</scope>
</reference>
<keyword id="KW-0217">Developmental protein</keyword>
<keyword id="KW-0238">DNA-binding</keyword>
<keyword id="KW-0539">Nucleus</keyword>
<keyword id="KW-1185">Reference proteome</keyword>
<keyword id="KW-0804">Transcription</keyword>
<keyword id="KW-0805">Transcription regulation</keyword>
<proteinExistence type="evidence at protein level"/>
<feature type="chain" id="PRO_0000271282" description="Transcription factor HEC3">
    <location>
        <begin position="1"/>
        <end position="224"/>
    </location>
</feature>
<feature type="domain" description="bHLH" evidence="1">
    <location>
        <begin position="125"/>
        <end position="174"/>
    </location>
</feature>
<feature type="region of interest" description="Disordered" evidence="2">
    <location>
        <begin position="22"/>
        <end position="42"/>
    </location>
</feature>
<feature type="region of interest" description="Disordered" evidence="2">
    <location>
        <begin position="68"/>
        <end position="88"/>
    </location>
</feature>
<feature type="region of interest" description="Disordered" evidence="2">
    <location>
        <begin position="183"/>
        <end position="224"/>
    </location>
</feature>
<feature type="compositionally biased region" description="Basic and acidic residues" evidence="2">
    <location>
        <begin position="28"/>
        <end position="37"/>
    </location>
</feature>
<feature type="compositionally biased region" description="Low complexity" evidence="2">
    <location>
        <begin position="68"/>
        <end position="77"/>
    </location>
</feature>
<feature type="compositionally biased region" description="Acidic residues" evidence="2">
    <location>
        <begin position="78"/>
        <end position="88"/>
    </location>
</feature>
<feature type="compositionally biased region" description="Polar residues" evidence="2">
    <location>
        <begin position="194"/>
        <end position="204"/>
    </location>
</feature>
<feature type="compositionally biased region" description="Gly residues" evidence="2">
    <location>
        <begin position="214"/>
        <end position="224"/>
    </location>
</feature>
<comment type="function">
    <text evidence="3">Required for the female reproductive tract development and fertility.</text>
</comment>
<comment type="subunit">
    <text evidence="3 4">Homodimer (Probable). Interacts with SPT.</text>
</comment>
<comment type="interaction">
    <interactant intactId="EBI-1536734">
        <id>Q9LXD8</id>
    </interactant>
    <interactant intactId="EBI-15191535">
        <id>O80748</id>
        <label>BBX26</label>
    </interactant>
    <organismsDiffer>false</organismsDiffer>
    <experiments>3</experiments>
</comment>
<comment type="interaction">
    <interactant intactId="EBI-1536734">
        <id>Q9LXD8</id>
    </interactant>
    <interactant intactId="EBI-4440101">
        <id>Q8GZ13</id>
        <label>BEE1</label>
    </interactant>
    <organismsDiffer>false</organismsDiffer>
    <experiments>4</experiments>
</comment>
<comment type="interaction">
    <interactant intactId="EBI-1536734">
        <id>Q9LXD8</id>
    </interactant>
    <interactant intactId="EBI-15193531">
        <id>Q5XVH0</id>
        <label>BHLH109</label>
    </interactant>
    <organismsDiffer>false</organismsDiffer>
    <experiments>5</experiments>
</comment>
<comment type="interaction">
    <interactant intactId="EBI-1536734">
        <id>Q9LXD8</id>
    </interactant>
    <interactant intactId="EBI-15191993">
        <id>Q9LV17</id>
        <label>BHLH79</label>
    </interactant>
    <organismsDiffer>false</organismsDiffer>
    <experiments>3</experiments>
</comment>
<comment type="interaction">
    <interactant intactId="EBI-1536734">
        <id>Q9LXD8</id>
    </interactant>
    <interactant intactId="EBI-3133327">
        <id>O82277</id>
        <label>TCP10</label>
    </interactant>
    <organismsDiffer>false</organismsDiffer>
    <experiments>3</experiments>
</comment>
<comment type="interaction">
    <interactant intactId="EBI-1536734">
        <id>Q9LXD8</id>
    </interactant>
    <interactant intactId="EBI-4426144">
        <id>Q9C9L2</id>
        <label>TCP15</label>
    </interactant>
    <organismsDiffer>false</organismsDiffer>
    <experiments>4</experiments>
</comment>
<comment type="interaction">
    <interactant intactId="EBI-1536734">
        <id>Q9LXD8</id>
    </interactant>
    <interactant intactId="EBI-15192325">
        <id>Q8LPR5</id>
        <label>TCP4</label>
    </interactant>
    <organismsDiffer>false</organismsDiffer>
    <experiments>3</experiments>
</comment>
<comment type="interaction">
    <interactant intactId="EBI-1536734">
        <id>Q9LXD8</id>
    </interactant>
    <interactant intactId="EBI-15192251">
        <id>Q9FME3</id>
        <label>TCP5</label>
    </interactant>
    <organismsDiffer>false</organismsDiffer>
    <experiments>3</experiments>
</comment>
<comment type="interaction">
    <interactant intactId="EBI-1536734">
        <id>Q9LXD8</id>
    </interactant>
    <interactant intactId="EBI-9838721">
        <id>O64647</id>
        <label>TCP9</label>
    </interactant>
    <organismsDiffer>false</organismsDiffer>
    <experiments>3</experiments>
</comment>
<comment type="subcellular location">
    <subcellularLocation>
        <location evidence="1">Nucleus</location>
    </subcellularLocation>
</comment>
<comment type="tissue specificity">
    <text evidence="3">Gynoecium.</text>
</comment>
<comment type="developmental stage">
    <text evidence="3">Expressed in the developing septum, transmitting tract and stigma.</text>
</comment>
<comment type="induction">
    <text evidence="3">Negatively regulated by ARF3/ETT in the abaxial gynoecium.</text>
</comment>
<comment type="disruption phenotype">
    <text evidence="3">Impaired pollen tube growth.</text>
</comment>
<sequence>MNNYNMNPSLFQNYTWNNIINSSNNNNKNDDHHHQHNNDPIGMAMDQYTQLHIFNPFSSSHFPPLSSSLTTTTLLSGDQEDDEDEEEPLEELGAMKEMMYKIAAMQSVDIDPATVKKPKRRNVRISDDPQSVAARHRRERISERIRILQRLVPGGTKMDTASMLDEAIRYVKFLKRQIRLLNNNTGYTPPPPQDQASQAVTTSWVSPPPPPSFGRGGRGVGELI</sequence>
<dbReference type="EMBL" id="AB020752">
    <property type="protein sequence ID" value="BAB09533.1"/>
    <property type="molecule type" value="Genomic_DNA"/>
</dbReference>
<dbReference type="EMBL" id="AL353994">
    <property type="protein sequence ID" value="CAB89355.1"/>
    <property type="molecule type" value="Genomic_DNA"/>
</dbReference>
<dbReference type="EMBL" id="CP002688">
    <property type="protein sequence ID" value="AED91442.1"/>
    <property type="molecule type" value="Genomic_DNA"/>
</dbReference>
<dbReference type="PIR" id="T49923">
    <property type="entry name" value="T49923"/>
</dbReference>
<dbReference type="RefSeq" id="NP_196537.1">
    <property type="nucleotide sequence ID" value="NM_121012.2"/>
</dbReference>
<dbReference type="SMR" id="Q9LXD8"/>
<dbReference type="BioGRID" id="16113">
    <property type="interactions" value="61"/>
</dbReference>
<dbReference type="FunCoup" id="Q9LXD8">
    <property type="interactions" value="15"/>
</dbReference>
<dbReference type="IntAct" id="Q9LXD8">
    <property type="interactions" value="71"/>
</dbReference>
<dbReference type="STRING" id="3702.Q9LXD8"/>
<dbReference type="PaxDb" id="3702-AT5G09750.1"/>
<dbReference type="EnsemblPlants" id="AT5G09750.1">
    <property type="protein sequence ID" value="AT5G09750.1"/>
    <property type="gene ID" value="AT5G09750"/>
</dbReference>
<dbReference type="GeneID" id="830835"/>
<dbReference type="Gramene" id="AT5G09750.1">
    <property type="protein sequence ID" value="AT5G09750.1"/>
    <property type="gene ID" value="AT5G09750"/>
</dbReference>
<dbReference type="KEGG" id="ath:AT5G09750"/>
<dbReference type="Araport" id="AT5G09750"/>
<dbReference type="TAIR" id="AT5G09750">
    <property type="gene designation" value="HEC3"/>
</dbReference>
<dbReference type="eggNOG" id="ENOG502RZ93">
    <property type="taxonomic scope" value="Eukaryota"/>
</dbReference>
<dbReference type="HOGENOM" id="CLU_108253_0_0_1"/>
<dbReference type="InParanoid" id="Q9LXD8"/>
<dbReference type="OMA" id="TWNNIIM"/>
<dbReference type="PRO" id="PR:Q9LXD8"/>
<dbReference type="Proteomes" id="UP000006548">
    <property type="component" value="Chromosome 5"/>
</dbReference>
<dbReference type="ExpressionAtlas" id="Q9LXD8">
    <property type="expression patterns" value="baseline and differential"/>
</dbReference>
<dbReference type="GO" id="GO:0005634">
    <property type="term" value="C:nucleus"/>
    <property type="evidence" value="ECO:0007669"/>
    <property type="project" value="UniProtKB-SubCell"/>
</dbReference>
<dbReference type="GO" id="GO:0003677">
    <property type="term" value="F:DNA binding"/>
    <property type="evidence" value="ECO:0007669"/>
    <property type="project" value="UniProtKB-KW"/>
</dbReference>
<dbReference type="GO" id="GO:0003700">
    <property type="term" value="F:DNA-binding transcription factor activity"/>
    <property type="evidence" value="ECO:0000250"/>
    <property type="project" value="TAIR"/>
</dbReference>
<dbReference type="GO" id="GO:0046983">
    <property type="term" value="F:protein dimerization activity"/>
    <property type="evidence" value="ECO:0007669"/>
    <property type="project" value="InterPro"/>
</dbReference>
<dbReference type="GO" id="GO:0048462">
    <property type="term" value="P:carpel formation"/>
    <property type="evidence" value="ECO:0000315"/>
    <property type="project" value="TAIR"/>
</dbReference>
<dbReference type="GO" id="GO:0048467">
    <property type="term" value="P:gynoecium development"/>
    <property type="evidence" value="ECO:0000316"/>
    <property type="project" value="TAIR"/>
</dbReference>
<dbReference type="GO" id="GO:0006355">
    <property type="term" value="P:regulation of DNA-templated transcription"/>
    <property type="evidence" value="ECO:0000304"/>
    <property type="project" value="TAIR"/>
</dbReference>
<dbReference type="GO" id="GO:0010500">
    <property type="term" value="P:transmitting tissue development"/>
    <property type="evidence" value="ECO:0000316"/>
    <property type="project" value="TAIR"/>
</dbReference>
<dbReference type="CDD" id="cd11454">
    <property type="entry name" value="bHLH_AtIND_like"/>
    <property type="match status" value="1"/>
</dbReference>
<dbReference type="FunFam" id="4.10.280.10:FF:000053">
    <property type="entry name" value="BHLH transcription factor"/>
    <property type="match status" value="1"/>
</dbReference>
<dbReference type="Gene3D" id="4.10.280.10">
    <property type="entry name" value="Helix-loop-helix DNA-binding domain"/>
    <property type="match status" value="1"/>
</dbReference>
<dbReference type="InterPro" id="IPR011598">
    <property type="entry name" value="bHLH_dom"/>
</dbReference>
<dbReference type="InterPro" id="IPR036638">
    <property type="entry name" value="HLH_DNA-bd_sf"/>
</dbReference>
<dbReference type="InterPro" id="IPR045843">
    <property type="entry name" value="IND-like"/>
</dbReference>
<dbReference type="PANTHER" id="PTHR45914:SF7">
    <property type="entry name" value="TRANSCRIPTION FACTOR HEC3"/>
    <property type="match status" value="1"/>
</dbReference>
<dbReference type="PANTHER" id="PTHR45914">
    <property type="entry name" value="TRANSCRIPTION FACTOR HEC3-RELATED"/>
    <property type="match status" value="1"/>
</dbReference>
<dbReference type="Pfam" id="PF00010">
    <property type="entry name" value="HLH"/>
    <property type="match status" value="1"/>
</dbReference>
<dbReference type="SMART" id="SM00353">
    <property type="entry name" value="HLH"/>
    <property type="match status" value="1"/>
</dbReference>
<dbReference type="SUPFAM" id="SSF47459">
    <property type="entry name" value="HLH, helix-loop-helix DNA-binding domain"/>
    <property type="match status" value="1"/>
</dbReference>
<dbReference type="PROSITE" id="PS50888">
    <property type="entry name" value="BHLH"/>
    <property type="match status" value="1"/>
</dbReference>
<organism>
    <name type="scientific">Arabidopsis thaliana</name>
    <name type="common">Mouse-ear cress</name>
    <dbReference type="NCBI Taxonomy" id="3702"/>
    <lineage>
        <taxon>Eukaryota</taxon>
        <taxon>Viridiplantae</taxon>
        <taxon>Streptophyta</taxon>
        <taxon>Embryophyta</taxon>
        <taxon>Tracheophyta</taxon>
        <taxon>Spermatophyta</taxon>
        <taxon>Magnoliopsida</taxon>
        <taxon>eudicotyledons</taxon>
        <taxon>Gunneridae</taxon>
        <taxon>Pentapetalae</taxon>
        <taxon>rosids</taxon>
        <taxon>malvids</taxon>
        <taxon>Brassicales</taxon>
        <taxon>Brassicaceae</taxon>
        <taxon>Camelineae</taxon>
        <taxon>Arabidopsis</taxon>
    </lineage>
</organism>
<evidence type="ECO:0000255" key="1">
    <source>
        <dbReference type="PROSITE-ProRule" id="PRU00981"/>
    </source>
</evidence>
<evidence type="ECO:0000256" key="2">
    <source>
        <dbReference type="SAM" id="MobiDB-lite"/>
    </source>
</evidence>
<evidence type="ECO:0000269" key="3">
    <source>
    </source>
</evidence>
<evidence type="ECO:0000305" key="4"/>
<gene>
    <name type="primary">HEC3</name>
    <name type="synonym">BHLH43</name>
    <name type="synonym">EN119</name>
    <name type="ordered locus">At5g09750</name>
    <name type="ORF">F17I14.60</name>
</gene>
<name>HEC3_ARATH</name>